<protein>
    <recommendedName>
        <fullName>Probable S-adenosyl-L-methionine-binding protein VNG_1115H</fullName>
    </recommendedName>
</protein>
<gene>
    <name type="ordered locus">VNG_1115H</name>
</gene>
<sequence length="124" mass="13302">MYATPIGYADTRFETAADAPRQGVETPYAANVQVYESFRGGLVGLEPDDRVVVVWWADDADRDVLAVRDGDRGVFTTRSPARPNPVCITPCELLAVDAADGTLAIRGVDMAHGSPVLDLKPALD</sequence>
<proteinExistence type="inferred from homology"/>
<organism>
    <name type="scientific">Halobacterium salinarum (strain ATCC 700922 / JCM 11081 / NRC-1)</name>
    <name type="common">Halobacterium halobium</name>
    <dbReference type="NCBI Taxonomy" id="64091"/>
    <lineage>
        <taxon>Archaea</taxon>
        <taxon>Methanobacteriati</taxon>
        <taxon>Methanobacteriota</taxon>
        <taxon>Stenosarchaea group</taxon>
        <taxon>Halobacteria</taxon>
        <taxon>Halobacteriales</taxon>
        <taxon>Halobacteriaceae</taxon>
        <taxon>Halobacterium</taxon>
        <taxon>Halobacterium salinarum NRC-34001</taxon>
    </lineage>
</organism>
<evidence type="ECO:0000250" key="1">
    <source>
        <dbReference type="UniProtKB" id="Q6NDF6"/>
    </source>
</evidence>
<evidence type="ECO:0000255" key="2">
    <source>
        <dbReference type="PROSITE-ProRule" id="PRU01003"/>
    </source>
</evidence>
<evidence type="ECO:0000305" key="3"/>
<keyword id="KW-1185">Reference proteome</keyword>
<keyword id="KW-0949">S-adenosyl-L-methionine</keyword>
<comment type="similarity">
    <text evidence="3">Belongs to the tRNA methyltransferase O family.</text>
</comment>
<dbReference type="EMBL" id="AE004437">
    <property type="protein sequence ID" value="AAG19506.1"/>
    <property type="molecule type" value="Genomic_DNA"/>
</dbReference>
<dbReference type="PIR" id="F84267">
    <property type="entry name" value="F84267"/>
</dbReference>
<dbReference type="RefSeq" id="WP_010902801.1">
    <property type="nucleotide sequence ID" value="NC_002607.1"/>
</dbReference>
<dbReference type="SMR" id="Q9HQK7"/>
<dbReference type="STRING" id="64091.VNG_1115H"/>
<dbReference type="PaxDb" id="64091-VNG_1115H"/>
<dbReference type="KEGG" id="hal:VNG_1115H"/>
<dbReference type="PATRIC" id="fig|64091.14.peg.852"/>
<dbReference type="HOGENOM" id="CLU_013458_2_0_2"/>
<dbReference type="InParanoid" id="Q9HQK7"/>
<dbReference type="OrthoDB" id="40408at2157"/>
<dbReference type="Proteomes" id="UP000000554">
    <property type="component" value="Chromosome"/>
</dbReference>
<dbReference type="Gene3D" id="2.40.30.70">
    <property type="entry name" value="YaeB-like"/>
    <property type="match status" value="1"/>
</dbReference>
<dbReference type="InterPro" id="IPR023370">
    <property type="entry name" value="TrmO-like_N"/>
</dbReference>
<dbReference type="InterPro" id="IPR023368">
    <property type="entry name" value="UPF0066_cons_site"/>
</dbReference>
<dbReference type="InterPro" id="IPR040372">
    <property type="entry name" value="YaeB-like"/>
</dbReference>
<dbReference type="InterPro" id="IPR036413">
    <property type="entry name" value="YaeB-like_sf"/>
</dbReference>
<dbReference type="InterPro" id="IPR036414">
    <property type="entry name" value="YaeB_N_sf"/>
</dbReference>
<dbReference type="PANTHER" id="PTHR12818">
    <property type="entry name" value="TRNA (ADENINE(37)-N6)-METHYLTRANSFERASE"/>
    <property type="match status" value="1"/>
</dbReference>
<dbReference type="PANTHER" id="PTHR12818:SF0">
    <property type="entry name" value="TRNA (ADENINE(37)-N6)-METHYLTRANSFERASE"/>
    <property type="match status" value="1"/>
</dbReference>
<dbReference type="Pfam" id="PF01980">
    <property type="entry name" value="TrmO_N"/>
    <property type="match status" value="1"/>
</dbReference>
<dbReference type="SUPFAM" id="SSF118196">
    <property type="entry name" value="YaeB-like"/>
    <property type="match status" value="1"/>
</dbReference>
<dbReference type="PROSITE" id="PS01318">
    <property type="entry name" value="TSAA_1"/>
    <property type="match status" value="1"/>
</dbReference>
<dbReference type="PROSITE" id="PS51668">
    <property type="entry name" value="TSAA_2"/>
    <property type="match status" value="1"/>
</dbReference>
<feature type="chain" id="PRO_0000155622" description="Probable S-adenosyl-L-methionine-binding protein VNG_1115H">
    <location>
        <begin position="1"/>
        <end position="124"/>
    </location>
</feature>
<feature type="domain" description="TsaA-like" evidence="2">
    <location>
        <begin position="3"/>
        <end position="124"/>
    </location>
</feature>
<feature type="binding site" evidence="1">
    <location>
        <begin position="20"/>
        <end position="22"/>
    </location>
    <ligand>
        <name>S-adenosyl-L-methionine</name>
        <dbReference type="ChEBI" id="CHEBI:59789"/>
    </ligand>
</feature>
<feature type="binding site" evidence="1">
    <location>
        <begin position="58"/>
        <end position="59"/>
    </location>
    <ligand>
        <name>S-adenosyl-L-methionine</name>
        <dbReference type="ChEBI" id="CHEBI:59789"/>
    </ligand>
</feature>
<feature type="binding site" evidence="1">
    <location>
        <position position="78"/>
    </location>
    <ligand>
        <name>S-adenosyl-L-methionine</name>
        <dbReference type="ChEBI" id="CHEBI:59789"/>
    </ligand>
</feature>
<feature type="binding site" evidence="1">
    <location>
        <begin position="111"/>
        <end position="114"/>
    </location>
    <ligand>
        <name>S-adenosyl-L-methionine</name>
        <dbReference type="ChEBI" id="CHEBI:59789"/>
    </ligand>
</feature>
<accession>Q9HQK7</accession>
<reference key="1">
    <citation type="journal article" date="2000" name="Proc. Natl. Acad. Sci. U.S.A.">
        <title>Genome sequence of Halobacterium species NRC-1.</title>
        <authorList>
            <person name="Ng W.V."/>
            <person name="Kennedy S.P."/>
            <person name="Mahairas G.G."/>
            <person name="Berquist B."/>
            <person name="Pan M."/>
            <person name="Shukla H.D."/>
            <person name="Lasky S.R."/>
            <person name="Baliga N.S."/>
            <person name="Thorsson V."/>
            <person name="Sbrogna J."/>
            <person name="Swartzell S."/>
            <person name="Weir D."/>
            <person name="Hall J."/>
            <person name="Dahl T.A."/>
            <person name="Welti R."/>
            <person name="Goo Y.A."/>
            <person name="Leithauser B."/>
            <person name="Keller K."/>
            <person name="Cruz R."/>
            <person name="Danson M.J."/>
            <person name="Hough D.W."/>
            <person name="Maddocks D.G."/>
            <person name="Jablonski P.E."/>
            <person name="Krebs M.P."/>
            <person name="Angevine C.M."/>
            <person name="Dale H."/>
            <person name="Isenbarger T.A."/>
            <person name="Peck R.F."/>
            <person name="Pohlschroder M."/>
            <person name="Spudich J.L."/>
            <person name="Jung K.-H."/>
            <person name="Alam M."/>
            <person name="Freitas T."/>
            <person name="Hou S."/>
            <person name="Daniels C.J."/>
            <person name="Dennis P.P."/>
            <person name="Omer A.D."/>
            <person name="Ebhardt H."/>
            <person name="Lowe T.M."/>
            <person name="Liang P."/>
            <person name="Riley M."/>
            <person name="Hood L."/>
            <person name="DasSarma S."/>
        </authorList>
    </citation>
    <scope>NUCLEOTIDE SEQUENCE [LARGE SCALE GENOMIC DNA]</scope>
    <source>
        <strain>ATCC 700922 / JCM 11081 / NRC-1</strain>
    </source>
</reference>
<name>Y1115_HALSA</name>